<evidence type="ECO:0000255" key="1">
    <source>
        <dbReference type="HAMAP-Rule" id="MF_01147"/>
    </source>
</evidence>
<sequence>MNPIAFHVGNLAIRWYGVVISIGAALGLLLAMYNCKIREASYDEFINMFLIAFPSAIIGARLYYVIFEFEDYRDNLINIFNIRQGGLAIHGGIIFGVLAVYIYLKYRKESFFEYVDVAAPSIILGQAIGRWGNFFNSEAHGGPVTKEFISKFPQFIQNGMFIEGTYYHPTFLYESIWNFIVCIFLVYLLKKTKKKGIVFMAYIGLYSLGRFFIEGLRTDSLYLGSIRVAQLISVLGIILSIFFIYNIIKKEKRY</sequence>
<keyword id="KW-1003">Cell membrane</keyword>
<keyword id="KW-0472">Membrane</keyword>
<keyword id="KW-0808">Transferase</keyword>
<keyword id="KW-0812">Transmembrane</keyword>
<keyword id="KW-1133">Transmembrane helix</keyword>
<organism>
    <name type="scientific">Clostridium botulinum (strain Langeland / NCTC 10281 / Type F)</name>
    <dbReference type="NCBI Taxonomy" id="441772"/>
    <lineage>
        <taxon>Bacteria</taxon>
        <taxon>Bacillati</taxon>
        <taxon>Bacillota</taxon>
        <taxon>Clostridia</taxon>
        <taxon>Eubacteriales</taxon>
        <taxon>Clostridiaceae</taxon>
        <taxon>Clostridium</taxon>
    </lineage>
</organism>
<protein>
    <recommendedName>
        <fullName evidence="1">Phosphatidylglycerol--prolipoprotein diacylglyceryl transferase</fullName>
        <ecNumber evidence="1">2.5.1.145</ecNumber>
    </recommendedName>
</protein>
<reference key="1">
    <citation type="submission" date="2007-06" db="EMBL/GenBank/DDBJ databases">
        <authorList>
            <person name="Brinkac L.M."/>
            <person name="Daugherty S."/>
            <person name="Dodson R.J."/>
            <person name="Madupu R."/>
            <person name="Brown J.L."/>
            <person name="Bruce D."/>
            <person name="Detter C."/>
            <person name="Munk C."/>
            <person name="Smith L.A."/>
            <person name="Smith T.J."/>
            <person name="White O."/>
            <person name="Brettin T.S."/>
        </authorList>
    </citation>
    <scope>NUCLEOTIDE SEQUENCE [LARGE SCALE GENOMIC DNA]</scope>
    <source>
        <strain>Langeland / NCTC 10281 / Type F</strain>
    </source>
</reference>
<dbReference type="EC" id="2.5.1.145" evidence="1"/>
<dbReference type="EMBL" id="CP000728">
    <property type="protein sequence ID" value="ABS41756.1"/>
    <property type="molecule type" value="Genomic_DNA"/>
</dbReference>
<dbReference type="RefSeq" id="WP_012100966.1">
    <property type="nucleotide sequence ID" value="NC_009699.1"/>
</dbReference>
<dbReference type="SMR" id="A7GIE9"/>
<dbReference type="KEGG" id="cbf:CLI_3347"/>
<dbReference type="HOGENOM" id="CLU_013386_0_1_9"/>
<dbReference type="UniPathway" id="UPA00664"/>
<dbReference type="Proteomes" id="UP000002410">
    <property type="component" value="Chromosome"/>
</dbReference>
<dbReference type="GO" id="GO:0005886">
    <property type="term" value="C:plasma membrane"/>
    <property type="evidence" value="ECO:0007669"/>
    <property type="project" value="UniProtKB-SubCell"/>
</dbReference>
<dbReference type="GO" id="GO:0008961">
    <property type="term" value="F:phosphatidylglycerol-prolipoprotein diacylglyceryl transferase activity"/>
    <property type="evidence" value="ECO:0007669"/>
    <property type="project" value="UniProtKB-UniRule"/>
</dbReference>
<dbReference type="GO" id="GO:0042158">
    <property type="term" value="P:lipoprotein biosynthetic process"/>
    <property type="evidence" value="ECO:0007669"/>
    <property type="project" value="UniProtKB-UniRule"/>
</dbReference>
<dbReference type="HAMAP" id="MF_01147">
    <property type="entry name" value="Lgt"/>
    <property type="match status" value="1"/>
</dbReference>
<dbReference type="InterPro" id="IPR001640">
    <property type="entry name" value="Lgt"/>
</dbReference>
<dbReference type="NCBIfam" id="TIGR00544">
    <property type="entry name" value="lgt"/>
    <property type="match status" value="1"/>
</dbReference>
<dbReference type="PANTHER" id="PTHR30589:SF0">
    <property type="entry name" value="PHOSPHATIDYLGLYCEROL--PROLIPOPROTEIN DIACYLGLYCERYL TRANSFERASE"/>
    <property type="match status" value="1"/>
</dbReference>
<dbReference type="PANTHER" id="PTHR30589">
    <property type="entry name" value="PROLIPOPROTEIN DIACYLGLYCERYL TRANSFERASE"/>
    <property type="match status" value="1"/>
</dbReference>
<dbReference type="Pfam" id="PF01790">
    <property type="entry name" value="LGT"/>
    <property type="match status" value="1"/>
</dbReference>
<dbReference type="PROSITE" id="PS01311">
    <property type="entry name" value="LGT"/>
    <property type="match status" value="1"/>
</dbReference>
<proteinExistence type="inferred from homology"/>
<comment type="function">
    <text evidence="1">Catalyzes the transfer of the diacylglyceryl group from phosphatidylglycerol to the sulfhydryl group of the N-terminal cysteine of a prolipoprotein, the first step in the formation of mature lipoproteins.</text>
</comment>
<comment type="catalytic activity">
    <reaction evidence="1">
        <text>L-cysteinyl-[prolipoprotein] + a 1,2-diacyl-sn-glycero-3-phospho-(1'-sn-glycerol) = an S-1,2-diacyl-sn-glyceryl-L-cysteinyl-[prolipoprotein] + sn-glycerol 1-phosphate + H(+)</text>
        <dbReference type="Rhea" id="RHEA:56712"/>
        <dbReference type="Rhea" id="RHEA-COMP:14679"/>
        <dbReference type="Rhea" id="RHEA-COMP:14680"/>
        <dbReference type="ChEBI" id="CHEBI:15378"/>
        <dbReference type="ChEBI" id="CHEBI:29950"/>
        <dbReference type="ChEBI" id="CHEBI:57685"/>
        <dbReference type="ChEBI" id="CHEBI:64716"/>
        <dbReference type="ChEBI" id="CHEBI:140658"/>
        <dbReference type="EC" id="2.5.1.145"/>
    </reaction>
</comment>
<comment type="pathway">
    <text evidence="1">Protein modification; lipoprotein biosynthesis (diacylglyceryl transfer).</text>
</comment>
<comment type="subcellular location">
    <subcellularLocation>
        <location evidence="1">Cell membrane</location>
        <topology evidence="1">Multi-pass membrane protein</topology>
    </subcellularLocation>
</comment>
<comment type="similarity">
    <text evidence="1">Belongs to the Lgt family.</text>
</comment>
<accession>A7GIE9</accession>
<feature type="chain" id="PRO_1000053417" description="Phosphatidylglycerol--prolipoprotein diacylglyceryl transferase">
    <location>
        <begin position="1"/>
        <end position="254"/>
    </location>
</feature>
<feature type="transmembrane region" description="Helical" evidence="1">
    <location>
        <begin position="11"/>
        <end position="31"/>
    </location>
</feature>
<feature type="transmembrane region" description="Helical" evidence="1">
    <location>
        <begin position="49"/>
        <end position="69"/>
    </location>
</feature>
<feature type="transmembrane region" description="Helical" evidence="1">
    <location>
        <begin position="84"/>
        <end position="104"/>
    </location>
</feature>
<feature type="transmembrane region" description="Helical" evidence="1">
    <location>
        <begin position="109"/>
        <end position="129"/>
    </location>
</feature>
<feature type="transmembrane region" description="Helical" evidence="1">
    <location>
        <begin position="169"/>
        <end position="189"/>
    </location>
</feature>
<feature type="transmembrane region" description="Helical" evidence="1">
    <location>
        <begin position="196"/>
        <end position="216"/>
    </location>
</feature>
<feature type="transmembrane region" description="Helical" evidence="1">
    <location>
        <begin position="228"/>
        <end position="248"/>
    </location>
</feature>
<feature type="binding site" evidence="1">
    <location>
        <position position="130"/>
    </location>
    <ligand>
        <name>a 1,2-diacyl-sn-glycero-3-phospho-(1'-sn-glycerol)</name>
        <dbReference type="ChEBI" id="CHEBI:64716"/>
    </ligand>
</feature>
<gene>
    <name evidence="1" type="primary">lgt</name>
    <name type="ordered locus">CLI_3347</name>
</gene>
<name>LGT_CLOBL</name>